<name>SPC42_YEAST</name>
<keyword id="KW-0002">3D-structure</keyword>
<keyword id="KW-0175">Coiled coil</keyword>
<keyword id="KW-0963">Cytoplasm</keyword>
<keyword id="KW-0206">Cytoskeleton</keyword>
<keyword id="KW-0539">Nucleus</keyword>
<keyword id="KW-0597">Phosphoprotein</keyword>
<keyword id="KW-1185">Reference proteome</keyword>
<gene>
    <name type="primary">SPC42</name>
    <name type="ordered locus">YKL042W</name>
    <name type="ORF">YKL255</name>
</gene>
<reference key="1">
    <citation type="journal article" date="1993" name="Yeast">
        <title>The sequence of a 17.5 kb DNA fragment on the left arm of yeast chromosome XI identifies the protein kinase gene ELM1, the DNA primase gene PRI2, a new gene encoding a putative histone and seven new open reading frames.</title>
        <authorList>
            <person name="Purnelle B."/>
            <person name="Tettelin H."/>
            <person name="van Dyck L."/>
            <person name="Skala J."/>
            <person name="Goffeau A."/>
        </authorList>
    </citation>
    <scope>NUCLEOTIDE SEQUENCE [GENOMIC DNA]</scope>
    <source>
        <strain>ATCC 204508 / S288c</strain>
    </source>
</reference>
<reference key="2">
    <citation type="journal article" date="1994" name="Nature">
        <title>Complete DNA sequence of yeast chromosome XI.</title>
        <authorList>
            <person name="Dujon B."/>
            <person name="Alexandraki D."/>
            <person name="Andre B."/>
            <person name="Ansorge W."/>
            <person name="Baladron V."/>
            <person name="Ballesta J.P.G."/>
            <person name="Banrevi A."/>
            <person name="Bolle P.-A."/>
            <person name="Bolotin-Fukuhara M."/>
            <person name="Bossier P."/>
            <person name="Bou G."/>
            <person name="Boyer J."/>
            <person name="Buitrago M.J."/>
            <person name="Cheret G."/>
            <person name="Colleaux L."/>
            <person name="Daignan-Fornier B."/>
            <person name="del Rey F."/>
            <person name="Dion C."/>
            <person name="Domdey H."/>
            <person name="Duesterhoeft A."/>
            <person name="Duesterhus S."/>
            <person name="Entian K.-D."/>
            <person name="Erfle H."/>
            <person name="Esteban P.F."/>
            <person name="Feldmann H."/>
            <person name="Fernandes L."/>
            <person name="Fobo G.M."/>
            <person name="Fritz C."/>
            <person name="Fukuhara H."/>
            <person name="Gabel C."/>
            <person name="Gaillon L."/>
            <person name="Garcia-Cantalejo J.M."/>
            <person name="Garcia-Ramirez J.J."/>
            <person name="Gent M.E."/>
            <person name="Ghazvini M."/>
            <person name="Goffeau A."/>
            <person name="Gonzalez A."/>
            <person name="Grothues D."/>
            <person name="Guerreiro P."/>
            <person name="Hegemann J.H."/>
            <person name="Hewitt N."/>
            <person name="Hilger F."/>
            <person name="Hollenberg C.P."/>
            <person name="Horaitis O."/>
            <person name="Indge K.J."/>
            <person name="Jacquier A."/>
            <person name="James C.M."/>
            <person name="Jauniaux J.-C."/>
            <person name="Jimenez A."/>
            <person name="Keuchel H."/>
            <person name="Kirchrath L."/>
            <person name="Kleine K."/>
            <person name="Koetter P."/>
            <person name="Legrain P."/>
            <person name="Liebl S."/>
            <person name="Louis E.J."/>
            <person name="Maia e Silva A."/>
            <person name="Marck C."/>
            <person name="Monnier A.-L."/>
            <person name="Moestl D."/>
            <person name="Mueller S."/>
            <person name="Obermaier B."/>
            <person name="Oliver S.G."/>
            <person name="Pallier C."/>
            <person name="Pascolo S."/>
            <person name="Pfeiffer F."/>
            <person name="Philippsen P."/>
            <person name="Planta R.J."/>
            <person name="Pohl F.M."/>
            <person name="Pohl T.M."/>
            <person name="Poehlmann R."/>
            <person name="Portetelle D."/>
            <person name="Purnelle B."/>
            <person name="Puzos V."/>
            <person name="Ramezani Rad M."/>
            <person name="Rasmussen S.W."/>
            <person name="Remacha M.A."/>
            <person name="Revuelta J.L."/>
            <person name="Richard G.-F."/>
            <person name="Rieger M."/>
            <person name="Rodrigues-Pousada C."/>
            <person name="Rose M."/>
            <person name="Rupp T."/>
            <person name="Santos M.A."/>
            <person name="Schwager C."/>
            <person name="Sensen C."/>
            <person name="Skala J."/>
            <person name="Soares H."/>
            <person name="Sor F."/>
            <person name="Stegemann J."/>
            <person name="Tettelin H."/>
            <person name="Thierry A."/>
            <person name="Tzermia M."/>
            <person name="Urrestarazu L.A."/>
            <person name="van Dyck L."/>
            <person name="van Vliet-Reedijk J.C."/>
            <person name="Valens M."/>
            <person name="Vandenbol M."/>
            <person name="Vilela C."/>
            <person name="Vissers S."/>
            <person name="von Wettstein D."/>
            <person name="Voss H."/>
            <person name="Wiemann S."/>
            <person name="Xu G."/>
            <person name="Zimmermann J."/>
            <person name="Haasemann M."/>
            <person name="Becker I."/>
            <person name="Mewes H.-W."/>
        </authorList>
    </citation>
    <scope>NUCLEOTIDE SEQUENCE [LARGE SCALE GENOMIC DNA]</scope>
    <source>
        <strain>ATCC 204508 / S288c</strain>
    </source>
</reference>
<reference key="3">
    <citation type="journal article" date="2014" name="G3 (Bethesda)">
        <title>The reference genome sequence of Saccharomyces cerevisiae: Then and now.</title>
        <authorList>
            <person name="Engel S.R."/>
            <person name="Dietrich F.S."/>
            <person name="Fisk D.G."/>
            <person name="Binkley G."/>
            <person name="Balakrishnan R."/>
            <person name="Costanzo M.C."/>
            <person name="Dwight S.S."/>
            <person name="Hitz B.C."/>
            <person name="Karra K."/>
            <person name="Nash R.S."/>
            <person name="Weng S."/>
            <person name="Wong E.D."/>
            <person name="Lloyd P."/>
            <person name="Skrzypek M.S."/>
            <person name="Miyasato S.R."/>
            <person name="Simison M."/>
            <person name="Cherry J.M."/>
        </authorList>
    </citation>
    <scope>GENOME REANNOTATION</scope>
    <source>
        <strain>ATCC 204508 / S288c</strain>
    </source>
</reference>
<reference key="4">
    <citation type="journal article" date="1996" name="J. Cell Biol.">
        <title>Spc42p: a phosphorylated component of the S. cerevisiae spindle pole body (SPD) with an essential function during SPB duplication.</title>
        <authorList>
            <person name="Donaldson A.D."/>
            <person name="Kilmartin J.V."/>
        </authorList>
    </citation>
    <scope>CHARACTERIZATION</scope>
</reference>
<reference key="5">
    <citation type="journal article" date="1999" name="Proc. Natl. Acad. Sci. U.S.A.">
        <title>Spc29p is a component of the Spc110p subcomplex and is essential for spindle pole body duplication.</title>
        <authorList>
            <person name="Elliott S."/>
            <person name="Knop M."/>
            <person name="Schlenstedt G."/>
            <person name="Schiebel E."/>
        </authorList>
    </citation>
    <scope>FUNCTION</scope>
    <scope>SUBCELLULAR LOCATION</scope>
    <scope>IDENTIFICATION IN THE SPC110 COMPLEX</scope>
</reference>
<reference key="6">
    <citation type="journal article" date="2007" name="J. Proteome Res.">
        <title>Large-scale phosphorylation analysis of alpha-factor-arrested Saccharomyces cerevisiae.</title>
        <authorList>
            <person name="Li X."/>
            <person name="Gerber S.A."/>
            <person name="Rudner A.D."/>
            <person name="Beausoleil S.A."/>
            <person name="Haas W."/>
            <person name="Villen J."/>
            <person name="Elias J.E."/>
            <person name="Gygi S.P."/>
        </authorList>
    </citation>
    <scope>PHOSPHORYLATION [LARGE SCALE ANALYSIS] AT SER-213 AND SER-217</scope>
    <scope>IDENTIFICATION BY MASS SPECTROMETRY [LARGE SCALE ANALYSIS]</scope>
    <source>
        <strain>ADR376</strain>
    </source>
</reference>
<reference key="7">
    <citation type="journal article" date="2008" name="Mol. Cell. Proteomics">
        <title>A multidimensional chromatography technology for in-depth phosphoproteome analysis.</title>
        <authorList>
            <person name="Albuquerque C.P."/>
            <person name="Smolka M.B."/>
            <person name="Payne S.H."/>
            <person name="Bafna V."/>
            <person name="Eng J."/>
            <person name="Zhou H."/>
        </authorList>
    </citation>
    <scope>IDENTIFICATION BY MASS SPECTROMETRY [LARGE SCALE ANALYSIS]</scope>
</reference>
<reference key="8">
    <citation type="journal article" date="2009" name="Science">
        <title>Global analysis of Cdk1 substrate phosphorylation sites provides insights into evolution.</title>
        <authorList>
            <person name="Holt L.J."/>
            <person name="Tuch B.B."/>
            <person name="Villen J."/>
            <person name="Johnson A.D."/>
            <person name="Gygi S.P."/>
            <person name="Morgan D.O."/>
        </authorList>
    </citation>
    <scope>PHOSPHORYLATION [LARGE SCALE ANALYSIS] AT SER-213; SER-217; SER-284 AND SER-329</scope>
    <scope>IDENTIFICATION BY MASS SPECTROMETRY [LARGE SCALE ANALYSIS]</scope>
</reference>
<reference key="9">
    <citation type="journal article" date="2008" name="Biochemistry">
        <title>Analysis of coiled-coil interactions between core proteins of the spindle pole body.</title>
        <authorList>
            <person name="Zizlsperger N."/>
            <person name="Malashkevich V.N."/>
            <person name="Pillay S."/>
            <person name="Keating A.E."/>
        </authorList>
    </citation>
    <scope>X-RAY CRYSTALLOGRAPHY (1.97 ANGSTROMS) OF 65-138</scope>
</reference>
<dbReference type="EMBL" id="X71621">
    <property type="protein sequence ID" value="CAA50630.1"/>
    <property type="molecule type" value="Genomic_DNA"/>
</dbReference>
<dbReference type="EMBL" id="Z28042">
    <property type="protein sequence ID" value="CAA81877.1"/>
    <property type="molecule type" value="Genomic_DNA"/>
</dbReference>
<dbReference type="EMBL" id="BK006944">
    <property type="protein sequence ID" value="DAA09114.1"/>
    <property type="molecule type" value="Genomic_DNA"/>
</dbReference>
<dbReference type="PIR" id="S37863">
    <property type="entry name" value="S37863"/>
</dbReference>
<dbReference type="RefSeq" id="NP_012882.3">
    <property type="nucleotide sequence ID" value="NM_001179608.3"/>
</dbReference>
<dbReference type="PDB" id="2Q6Q">
    <property type="method" value="X-ray"/>
    <property type="resolution" value="1.97 A"/>
    <property type="chains" value="A/B=65-138"/>
</dbReference>
<dbReference type="PDB" id="6OD2">
    <property type="method" value="X-ray"/>
    <property type="resolution" value="2.44 A"/>
    <property type="chains" value="A=246-298"/>
</dbReference>
<dbReference type="PDB" id="6OEC">
    <property type="method" value="X-ray"/>
    <property type="resolution" value="2.51 A"/>
    <property type="chains" value="A/B/C/D/E/F/G/H/I/J/K/L=181-204"/>
</dbReference>
<dbReference type="PDB" id="6OEI">
    <property type="method" value="X-ray"/>
    <property type="resolution" value="2.58 A"/>
    <property type="chains" value="A=11-130"/>
</dbReference>
<dbReference type="PDBsum" id="2Q6Q"/>
<dbReference type="PDBsum" id="6OD2"/>
<dbReference type="PDBsum" id="6OEC"/>
<dbReference type="PDBsum" id="6OEI"/>
<dbReference type="SMR" id="P36094"/>
<dbReference type="BioGRID" id="34090">
    <property type="interactions" value="339"/>
</dbReference>
<dbReference type="ComplexPortal" id="CPX-1419">
    <property type="entry name" value="Spindle pole body central plaque complex"/>
</dbReference>
<dbReference type="ComplexPortal" id="CPX-1420">
    <property type="entry name" value="Spindle pole body intermediate layer 2 complex"/>
</dbReference>
<dbReference type="DIP" id="DIP-2446N"/>
<dbReference type="FunCoup" id="P36094">
    <property type="interactions" value="250"/>
</dbReference>
<dbReference type="IntAct" id="P36094">
    <property type="interactions" value="48"/>
</dbReference>
<dbReference type="MINT" id="P36094"/>
<dbReference type="STRING" id="4932.YKL042W"/>
<dbReference type="iPTMnet" id="P36094"/>
<dbReference type="PaxDb" id="4932-YKL042W"/>
<dbReference type="PeptideAtlas" id="P36094"/>
<dbReference type="EnsemblFungi" id="YKL042W_mRNA">
    <property type="protein sequence ID" value="YKL042W"/>
    <property type="gene ID" value="YKL042W"/>
</dbReference>
<dbReference type="GeneID" id="853824"/>
<dbReference type="KEGG" id="sce:YKL042W"/>
<dbReference type="AGR" id="SGD:S000001525"/>
<dbReference type="SGD" id="S000001525">
    <property type="gene designation" value="SPC42"/>
</dbReference>
<dbReference type="VEuPathDB" id="FungiDB:YKL042W"/>
<dbReference type="eggNOG" id="ENOG502RYX7">
    <property type="taxonomic scope" value="Eukaryota"/>
</dbReference>
<dbReference type="HOGENOM" id="CLU_056211_1_0_1"/>
<dbReference type="InParanoid" id="P36094"/>
<dbReference type="OMA" id="HNHATHR"/>
<dbReference type="OrthoDB" id="4061426at2759"/>
<dbReference type="BioCyc" id="YEAST:G3O-31843-MONOMER"/>
<dbReference type="BioGRID-ORCS" id="853824">
    <property type="hits" value="2 hits in 10 CRISPR screens"/>
</dbReference>
<dbReference type="CD-CODE" id="876000F7">
    <property type="entry name" value="Centrosome"/>
</dbReference>
<dbReference type="EvolutionaryTrace" id="P36094"/>
<dbReference type="PRO" id="PR:P36094"/>
<dbReference type="Proteomes" id="UP000002311">
    <property type="component" value="Chromosome XI"/>
</dbReference>
<dbReference type="RNAct" id="P36094">
    <property type="molecule type" value="protein"/>
</dbReference>
<dbReference type="GO" id="GO:0005823">
    <property type="term" value="C:central plaque of spindle pole body"/>
    <property type="evidence" value="ECO:0000314"/>
    <property type="project" value="SGD"/>
</dbReference>
<dbReference type="GO" id="GO:0005737">
    <property type="term" value="C:cytoplasm"/>
    <property type="evidence" value="ECO:0007669"/>
    <property type="project" value="UniProtKB-KW"/>
</dbReference>
<dbReference type="GO" id="GO:0005821">
    <property type="term" value="C:intermediate layer of spindle pole body"/>
    <property type="evidence" value="ECO:0000314"/>
    <property type="project" value="SGD"/>
</dbReference>
<dbReference type="GO" id="GO:0005634">
    <property type="term" value="C:nucleus"/>
    <property type="evidence" value="ECO:0007669"/>
    <property type="project" value="UniProtKB-SubCell"/>
</dbReference>
<dbReference type="GO" id="GO:0005200">
    <property type="term" value="F:structural constituent of cytoskeleton"/>
    <property type="evidence" value="ECO:0000315"/>
    <property type="project" value="SGD"/>
</dbReference>
<dbReference type="GO" id="GO:0010968">
    <property type="term" value="P:regulation of microtubule nucleation"/>
    <property type="evidence" value="ECO:0000303"/>
    <property type="project" value="ComplexPortal"/>
</dbReference>
<dbReference type="GO" id="GO:0030474">
    <property type="term" value="P:spindle pole body duplication"/>
    <property type="evidence" value="ECO:0000315"/>
    <property type="project" value="SGD"/>
</dbReference>
<dbReference type="Gene3D" id="1.20.5.1180">
    <property type="entry name" value="Geminin coiled-coil domain"/>
    <property type="match status" value="1"/>
</dbReference>
<dbReference type="InterPro" id="IPR021611">
    <property type="entry name" value="Spc42"/>
</dbReference>
<dbReference type="Pfam" id="PF11544">
    <property type="entry name" value="Spc42p"/>
    <property type="match status" value="1"/>
</dbReference>
<accession>P36094</accession>
<accession>D6VXP4</accession>
<feature type="chain" id="PRO_0000072109" description="Spindle pole body component SPC42">
    <location>
        <begin position="1"/>
        <end position="363"/>
    </location>
</feature>
<feature type="region of interest" description="Disordered" evidence="2">
    <location>
        <begin position="160"/>
        <end position="184"/>
    </location>
</feature>
<feature type="region of interest" description="Disordered" evidence="2">
    <location>
        <begin position="310"/>
        <end position="363"/>
    </location>
</feature>
<feature type="coiled-coil region" evidence="1">
    <location>
        <begin position="60"/>
        <end position="137"/>
    </location>
</feature>
<feature type="coiled-coil region" evidence="1">
    <location>
        <begin position="249"/>
        <end position="298"/>
    </location>
</feature>
<feature type="compositionally biased region" description="Polar residues" evidence="2">
    <location>
        <begin position="170"/>
        <end position="182"/>
    </location>
</feature>
<feature type="compositionally biased region" description="Low complexity" evidence="2">
    <location>
        <begin position="319"/>
        <end position="329"/>
    </location>
</feature>
<feature type="compositionally biased region" description="Polar residues" evidence="2">
    <location>
        <begin position="349"/>
        <end position="363"/>
    </location>
</feature>
<feature type="modified residue" description="Phosphoserine" evidence="5 6">
    <location>
        <position position="213"/>
    </location>
</feature>
<feature type="modified residue" description="Phosphoserine" evidence="5 6">
    <location>
        <position position="217"/>
    </location>
</feature>
<feature type="modified residue" description="Phosphoserine" evidence="6">
    <location>
        <position position="284"/>
    </location>
</feature>
<feature type="modified residue" description="Phosphoserine" evidence="6">
    <location>
        <position position="329"/>
    </location>
</feature>
<feature type="helix" evidence="7">
    <location>
        <begin position="68"/>
        <end position="124"/>
    </location>
</feature>
<feature type="helix" evidence="8">
    <location>
        <begin position="183"/>
        <end position="201"/>
    </location>
</feature>
<comment type="function">
    <text evidence="3">Forms a polymeric layer at the periphery of the spindle pole body (SPB) central plaque which has an essential function during SPB duplication and may facilitate attachment of the SPB to the nuclear membrane.</text>
</comment>
<comment type="subunit">
    <text evidence="3">Component of the SPC110 complex containing at least CMD1, SPC29, SPC42 and SCP110.</text>
</comment>
<comment type="interaction">
    <interactant intactId="EBI-17777">
        <id>P36094</id>
    </interactant>
    <interactant intactId="EBI-29172">
        <id>P53865</id>
        <label>CNM67</label>
    </interactant>
    <organismsDiffer>false</organismsDiffer>
    <experiments>4</experiments>
</comment>
<comment type="interaction">
    <interactant intactId="EBI-17777">
        <id>P36094</id>
    </interactant>
    <interactant intactId="EBI-25261">
        <id>P40457</id>
        <label>MLP2</label>
    </interactant>
    <organismsDiffer>false</organismsDiffer>
    <experiments>3</experiments>
</comment>
<comment type="interaction">
    <interactant intactId="EBI-17777">
        <id>P36094</id>
    </interactant>
    <interactant intactId="EBI-17402">
        <id>P32908</id>
        <label>SMC1</label>
    </interactant>
    <organismsDiffer>false</organismsDiffer>
    <experiments>3</experiments>
</comment>
<comment type="subcellular location">
    <subcellularLocation>
        <location evidence="3">Nucleus</location>
    </subcellularLocation>
    <subcellularLocation>
        <location evidence="3">Cytoplasm</location>
        <location evidence="3">Cytoskeleton</location>
        <location evidence="3">Microtubule organizing center</location>
        <location evidence="3">Spindle pole body</location>
    </subcellularLocation>
</comment>
<comment type="similarity">
    <text evidence="4">Belongs to the SPC42 family.</text>
</comment>
<proteinExistence type="evidence at protein level"/>
<sequence>MNGSPTPKRYSSKSSRLYDDYYNIPYQYSNPTPMNRDYNDVGSRINADKLVPEEYKRNTEFINKAVQQNKELNFKLREKQNEIFELKKIAETLRSKLEKYVDITKKLEDQNLNLQIKISDLEKKLSDANSTFKEMRFPKVKDPMVDDDPVSENYDQINVPKHRAPDATGNPRTTNKVSNTSDQDSRLKAIERTLSVLTNYVMRSEDGNNDRMSPLPSPLNTILPINNRLNFQEPKRYNPTVKVNPSDDDIMMYESAELKRVEEEIEELKRKILVRKKHDLRKLSLNNQLQELQSMMDGDDNIKLDNVSKHNHATHRHSSQSSRDYSPSSDACLECSNDLYEKNRVKPENNMSETFATPTPNNR</sequence>
<evidence type="ECO:0000255" key="1"/>
<evidence type="ECO:0000256" key="2">
    <source>
        <dbReference type="SAM" id="MobiDB-lite"/>
    </source>
</evidence>
<evidence type="ECO:0000269" key="3">
    <source>
    </source>
</evidence>
<evidence type="ECO:0000305" key="4"/>
<evidence type="ECO:0007744" key="5">
    <source>
    </source>
</evidence>
<evidence type="ECO:0007744" key="6">
    <source>
    </source>
</evidence>
<evidence type="ECO:0007829" key="7">
    <source>
        <dbReference type="PDB" id="2Q6Q"/>
    </source>
</evidence>
<evidence type="ECO:0007829" key="8">
    <source>
        <dbReference type="PDB" id="6OEC"/>
    </source>
</evidence>
<protein>
    <recommendedName>
        <fullName>Spindle pole body component SPC42</fullName>
    </recommendedName>
</protein>
<organism>
    <name type="scientific">Saccharomyces cerevisiae (strain ATCC 204508 / S288c)</name>
    <name type="common">Baker's yeast</name>
    <dbReference type="NCBI Taxonomy" id="559292"/>
    <lineage>
        <taxon>Eukaryota</taxon>
        <taxon>Fungi</taxon>
        <taxon>Dikarya</taxon>
        <taxon>Ascomycota</taxon>
        <taxon>Saccharomycotina</taxon>
        <taxon>Saccharomycetes</taxon>
        <taxon>Saccharomycetales</taxon>
        <taxon>Saccharomycetaceae</taxon>
        <taxon>Saccharomyces</taxon>
    </lineage>
</organism>